<sequence>MAETSNNKTSEEAKANEKKSQSETLEESKLENMNSEESTETTQTESMETAETETSLQTELESAKKEIESLKDSWARERAEFQNFKRRSAQEFVSIRKEAVKSLVSGFLNPIDNLERVGATQTNSEELKPFVDGVTMILKEFYSVLEKSNVIRFDPKGEPFDPMSMEALSSEEGDQYSEETVIDVYQPGYYYKENEDKFTLRPARVRIGKPKS</sequence>
<proteinExistence type="inferred from homology"/>
<keyword id="KW-0143">Chaperone</keyword>
<keyword id="KW-0963">Cytoplasm</keyword>
<keyword id="KW-0346">Stress response</keyword>
<feature type="chain" id="PRO_0000113805" description="Protein GrpE">
    <location>
        <begin position="1"/>
        <end position="212"/>
    </location>
</feature>
<feature type="region of interest" description="Disordered" evidence="2">
    <location>
        <begin position="1"/>
        <end position="68"/>
    </location>
</feature>
<feature type="compositionally biased region" description="Basic and acidic residues" evidence="2">
    <location>
        <begin position="9"/>
        <end position="30"/>
    </location>
</feature>
<feature type="compositionally biased region" description="Low complexity" evidence="2">
    <location>
        <begin position="40"/>
        <end position="60"/>
    </location>
</feature>
<reference key="1">
    <citation type="journal article" date="1998" name="Gene">
        <title>Molecular analysis of the dnaK locus of Leptospira interrogans serovar Copenhageni.</title>
        <authorList>
            <person name="Ballard S.A."/>
            <person name="Go M."/>
            <person name="Segers R.P.A.M."/>
            <person name="Adler B."/>
        </authorList>
    </citation>
    <scope>NUCLEOTIDE SEQUENCE [GENOMIC DNA]</scope>
    <source>
        <strain>Wijnberg</strain>
    </source>
</reference>
<reference key="2">
    <citation type="journal article" date="2004" name="J. Bacteriol.">
        <title>Comparative genomics of two Leptospira interrogans serovars reveals novel insights into physiology and pathogenesis.</title>
        <authorList>
            <person name="Nascimento A.L.T.O."/>
            <person name="Ko A.I."/>
            <person name="Martins E.A.L."/>
            <person name="Monteiro-Vitorello C.B."/>
            <person name="Ho P.L."/>
            <person name="Haake D.A."/>
            <person name="Verjovski-Almeida S."/>
            <person name="Hartskeerl R.A."/>
            <person name="Marques M.V."/>
            <person name="Oliveira M.C."/>
            <person name="Menck C.F.M."/>
            <person name="Leite L.C.C."/>
            <person name="Carrer H."/>
            <person name="Coutinho L.L."/>
            <person name="Degrave W.M."/>
            <person name="Dellagostin O.A."/>
            <person name="El-Dorry H."/>
            <person name="Ferro E.S."/>
            <person name="Ferro M.I.T."/>
            <person name="Furlan L.R."/>
            <person name="Gamberini M."/>
            <person name="Giglioti E.A."/>
            <person name="Goes-Neto A."/>
            <person name="Goldman G.H."/>
            <person name="Goldman M.H.S."/>
            <person name="Harakava R."/>
            <person name="Jeronimo S.M.B."/>
            <person name="Junqueira-de-Azevedo I.L.M."/>
            <person name="Kimura E.T."/>
            <person name="Kuramae E.E."/>
            <person name="Lemos E.G.M."/>
            <person name="Lemos M.V.F."/>
            <person name="Marino C.L."/>
            <person name="Nunes L.R."/>
            <person name="de Oliveira R.C."/>
            <person name="Pereira G.G."/>
            <person name="Reis M.S."/>
            <person name="Schriefer A."/>
            <person name="Siqueira W.J."/>
            <person name="Sommer P."/>
            <person name="Tsai S.M."/>
            <person name="Simpson A.J.G."/>
            <person name="Ferro J.A."/>
            <person name="Camargo L.E.A."/>
            <person name="Kitajima J.P."/>
            <person name="Setubal J.C."/>
            <person name="Van Sluys M.A."/>
        </authorList>
    </citation>
    <scope>NUCLEOTIDE SEQUENCE [LARGE SCALE GENOMIC DNA]</scope>
    <source>
        <strain>Fiocruz L1-130</strain>
    </source>
</reference>
<comment type="function">
    <text evidence="1">Participates actively in the response to hyperosmotic and heat shock by preventing the aggregation of stress-denatured proteins, in association with DnaK and GrpE. It is the nucleotide exchange factor for DnaK and may function as a thermosensor. Unfolded proteins bind initially to DnaJ; upon interaction with the DnaJ-bound protein, DnaK hydrolyzes its bound ATP, resulting in the formation of a stable complex. GrpE releases ADP from DnaK; ATP binding to DnaK triggers the release of the substrate protein, thus completing the reaction cycle. Several rounds of ATP-dependent interactions between DnaJ, DnaK and GrpE are required for fully efficient folding.</text>
</comment>
<comment type="subunit">
    <text evidence="1">Homodimer.</text>
</comment>
<comment type="subcellular location">
    <subcellularLocation>
        <location evidence="1">Cytoplasm</location>
    </subcellularLocation>
</comment>
<comment type="similarity">
    <text evidence="1">Belongs to the GrpE family.</text>
</comment>
<accession>P61444</accession>
<accession>O51868</accession>
<evidence type="ECO:0000255" key="1">
    <source>
        <dbReference type="HAMAP-Rule" id="MF_01151"/>
    </source>
</evidence>
<evidence type="ECO:0000256" key="2">
    <source>
        <dbReference type="SAM" id="MobiDB-lite"/>
    </source>
</evidence>
<dbReference type="EMBL" id="AF007813">
    <property type="protein sequence ID" value="AAC35415.1"/>
    <property type="molecule type" value="Genomic_DNA"/>
</dbReference>
<dbReference type="EMBL" id="AE016823">
    <property type="protein sequence ID" value="AAS69146.1"/>
    <property type="molecule type" value="Genomic_DNA"/>
</dbReference>
<dbReference type="RefSeq" id="WP_000852393.1">
    <property type="nucleotide sequence ID" value="NC_005823.1"/>
</dbReference>
<dbReference type="SMR" id="P61444"/>
<dbReference type="GeneID" id="61143880"/>
<dbReference type="KEGG" id="lic:LIC_10525"/>
<dbReference type="HOGENOM" id="CLU_057217_5_2_12"/>
<dbReference type="Proteomes" id="UP000007037">
    <property type="component" value="Chromosome I"/>
</dbReference>
<dbReference type="GO" id="GO:0005737">
    <property type="term" value="C:cytoplasm"/>
    <property type="evidence" value="ECO:0007669"/>
    <property type="project" value="UniProtKB-SubCell"/>
</dbReference>
<dbReference type="GO" id="GO:0000774">
    <property type="term" value="F:adenyl-nucleotide exchange factor activity"/>
    <property type="evidence" value="ECO:0007669"/>
    <property type="project" value="InterPro"/>
</dbReference>
<dbReference type="GO" id="GO:0042803">
    <property type="term" value="F:protein homodimerization activity"/>
    <property type="evidence" value="ECO:0007669"/>
    <property type="project" value="InterPro"/>
</dbReference>
<dbReference type="GO" id="GO:0051087">
    <property type="term" value="F:protein-folding chaperone binding"/>
    <property type="evidence" value="ECO:0007669"/>
    <property type="project" value="InterPro"/>
</dbReference>
<dbReference type="GO" id="GO:0051082">
    <property type="term" value="F:unfolded protein binding"/>
    <property type="evidence" value="ECO:0007669"/>
    <property type="project" value="TreeGrafter"/>
</dbReference>
<dbReference type="GO" id="GO:0006457">
    <property type="term" value="P:protein folding"/>
    <property type="evidence" value="ECO:0007669"/>
    <property type="project" value="InterPro"/>
</dbReference>
<dbReference type="CDD" id="cd00446">
    <property type="entry name" value="GrpE"/>
    <property type="match status" value="1"/>
</dbReference>
<dbReference type="FunFam" id="2.30.22.10:FF:000006">
    <property type="entry name" value="Protein GrpE"/>
    <property type="match status" value="1"/>
</dbReference>
<dbReference type="Gene3D" id="3.90.20.20">
    <property type="match status" value="1"/>
</dbReference>
<dbReference type="Gene3D" id="2.30.22.10">
    <property type="entry name" value="Head domain of nucleotide exchange factor GrpE"/>
    <property type="match status" value="1"/>
</dbReference>
<dbReference type="HAMAP" id="MF_01151">
    <property type="entry name" value="GrpE"/>
    <property type="match status" value="1"/>
</dbReference>
<dbReference type="InterPro" id="IPR000740">
    <property type="entry name" value="GrpE"/>
</dbReference>
<dbReference type="InterPro" id="IPR013805">
    <property type="entry name" value="GrpE_coiled_coil"/>
</dbReference>
<dbReference type="InterPro" id="IPR009012">
    <property type="entry name" value="GrpE_head"/>
</dbReference>
<dbReference type="NCBIfam" id="NF010744">
    <property type="entry name" value="PRK14146.1"/>
    <property type="match status" value="1"/>
</dbReference>
<dbReference type="PANTHER" id="PTHR21237">
    <property type="entry name" value="GRPE PROTEIN"/>
    <property type="match status" value="1"/>
</dbReference>
<dbReference type="PANTHER" id="PTHR21237:SF23">
    <property type="entry name" value="GRPE PROTEIN HOMOLOG, MITOCHONDRIAL"/>
    <property type="match status" value="1"/>
</dbReference>
<dbReference type="Pfam" id="PF01025">
    <property type="entry name" value="GrpE"/>
    <property type="match status" value="1"/>
</dbReference>
<dbReference type="PRINTS" id="PR00773">
    <property type="entry name" value="GRPEPROTEIN"/>
</dbReference>
<dbReference type="SUPFAM" id="SSF58014">
    <property type="entry name" value="Coiled-coil domain of nucleotide exchange factor GrpE"/>
    <property type="match status" value="1"/>
</dbReference>
<dbReference type="SUPFAM" id="SSF51064">
    <property type="entry name" value="Head domain of nucleotide exchange factor GrpE"/>
    <property type="match status" value="1"/>
</dbReference>
<dbReference type="PROSITE" id="PS01071">
    <property type="entry name" value="GRPE"/>
    <property type="match status" value="1"/>
</dbReference>
<gene>
    <name evidence="1" type="primary">grpE</name>
    <name type="ordered locus">LIC_10525</name>
</gene>
<organism>
    <name type="scientific">Leptospira interrogans serogroup Icterohaemorrhagiae serovar copenhageni (strain Fiocruz L1-130)</name>
    <dbReference type="NCBI Taxonomy" id="267671"/>
    <lineage>
        <taxon>Bacteria</taxon>
        <taxon>Pseudomonadati</taxon>
        <taxon>Spirochaetota</taxon>
        <taxon>Spirochaetia</taxon>
        <taxon>Leptospirales</taxon>
        <taxon>Leptospiraceae</taxon>
        <taxon>Leptospira</taxon>
    </lineage>
</organism>
<protein>
    <recommendedName>
        <fullName evidence="1">Protein GrpE</fullName>
    </recommendedName>
    <alternativeName>
        <fullName evidence="1">HSP-70 cofactor</fullName>
    </alternativeName>
</protein>
<name>GRPE_LEPIC</name>